<reference key="1">
    <citation type="journal article" date="2009" name="PLoS Genet.">
        <title>Organised genome dynamics in the Escherichia coli species results in highly diverse adaptive paths.</title>
        <authorList>
            <person name="Touchon M."/>
            <person name="Hoede C."/>
            <person name="Tenaillon O."/>
            <person name="Barbe V."/>
            <person name="Baeriswyl S."/>
            <person name="Bidet P."/>
            <person name="Bingen E."/>
            <person name="Bonacorsi S."/>
            <person name="Bouchier C."/>
            <person name="Bouvet O."/>
            <person name="Calteau A."/>
            <person name="Chiapello H."/>
            <person name="Clermont O."/>
            <person name="Cruveiller S."/>
            <person name="Danchin A."/>
            <person name="Diard M."/>
            <person name="Dossat C."/>
            <person name="Karoui M.E."/>
            <person name="Frapy E."/>
            <person name="Garry L."/>
            <person name="Ghigo J.M."/>
            <person name="Gilles A.M."/>
            <person name="Johnson J."/>
            <person name="Le Bouguenec C."/>
            <person name="Lescat M."/>
            <person name="Mangenot S."/>
            <person name="Martinez-Jehanne V."/>
            <person name="Matic I."/>
            <person name="Nassif X."/>
            <person name="Oztas S."/>
            <person name="Petit M.A."/>
            <person name="Pichon C."/>
            <person name="Rouy Z."/>
            <person name="Ruf C.S."/>
            <person name="Schneider D."/>
            <person name="Tourret J."/>
            <person name="Vacherie B."/>
            <person name="Vallenet D."/>
            <person name="Medigue C."/>
            <person name="Rocha E.P.C."/>
            <person name="Denamur E."/>
        </authorList>
    </citation>
    <scope>NUCLEOTIDE SEQUENCE [LARGE SCALE GENOMIC DNA]</scope>
    <source>
        <strain>IAI1</strain>
    </source>
</reference>
<name>YEJL_ECO8A</name>
<sequence>MPQISRYSDEQVEQLLAELLNVLEKHKAPTDLSLMVLGNMVTNLINTSIAPAQRQAIANSFARALQSSINEDKAH</sequence>
<dbReference type="EMBL" id="CU928160">
    <property type="protein sequence ID" value="CAQ99114.1"/>
    <property type="molecule type" value="Genomic_DNA"/>
</dbReference>
<dbReference type="RefSeq" id="WP_001135667.1">
    <property type="nucleotide sequence ID" value="NC_011741.1"/>
</dbReference>
<dbReference type="SMR" id="B7M537"/>
<dbReference type="KEGG" id="ecr:ECIAI1_2269"/>
<dbReference type="HOGENOM" id="CLU_175457_0_0_6"/>
<dbReference type="FunFam" id="1.10.3390.10:FF:000001">
    <property type="entry name" value="UPF0352 protein YejL"/>
    <property type="match status" value="1"/>
</dbReference>
<dbReference type="Gene3D" id="1.10.3390.10">
    <property type="entry name" value="YejL-like"/>
    <property type="match status" value="1"/>
</dbReference>
<dbReference type="HAMAP" id="MF_00816">
    <property type="entry name" value="UPF0352"/>
    <property type="match status" value="1"/>
</dbReference>
<dbReference type="InterPro" id="IPR009857">
    <property type="entry name" value="UPF0352"/>
</dbReference>
<dbReference type="InterPro" id="IPR023202">
    <property type="entry name" value="YejL_sf"/>
</dbReference>
<dbReference type="NCBIfam" id="NF010242">
    <property type="entry name" value="PRK13689.1"/>
    <property type="match status" value="1"/>
</dbReference>
<dbReference type="Pfam" id="PF07208">
    <property type="entry name" value="DUF1414"/>
    <property type="match status" value="1"/>
</dbReference>
<dbReference type="PIRSF" id="PIRSF006188">
    <property type="entry name" value="UCP006188"/>
    <property type="match status" value="1"/>
</dbReference>
<dbReference type="SUPFAM" id="SSF158651">
    <property type="entry name" value="YejL-like"/>
    <property type="match status" value="1"/>
</dbReference>
<comment type="similarity">
    <text evidence="1">Belongs to the UPF0352 family.</text>
</comment>
<proteinExistence type="inferred from homology"/>
<gene>
    <name evidence="1" type="primary">yejL</name>
    <name type="ordered locus">ECIAI1_2269</name>
</gene>
<accession>B7M537</accession>
<evidence type="ECO:0000255" key="1">
    <source>
        <dbReference type="HAMAP-Rule" id="MF_00816"/>
    </source>
</evidence>
<organism>
    <name type="scientific">Escherichia coli O8 (strain IAI1)</name>
    <dbReference type="NCBI Taxonomy" id="585034"/>
    <lineage>
        <taxon>Bacteria</taxon>
        <taxon>Pseudomonadati</taxon>
        <taxon>Pseudomonadota</taxon>
        <taxon>Gammaproteobacteria</taxon>
        <taxon>Enterobacterales</taxon>
        <taxon>Enterobacteriaceae</taxon>
        <taxon>Escherichia</taxon>
    </lineage>
</organism>
<feature type="chain" id="PRO_1000199589" description="UPF0352 protein YejL">
    <location>
        <begin position="1"/>
        <end position="75"/>
    </location>
</feature>
<protein>
    <recommendedName>
        <fullName evidence="1">UPF0352 protein YejL</fullName>
    </recommendedName>
</protein>